<evidence type="ECO:0000255" key="1">
    <source>
        <dbReference type="HAMAP-Rule" id="MF_00644"/>
    </source>
</evidence>
<protein>
    <recommendedName>
        <fullName evidence="1">Photosystem II reaction center protein Z</fullName>
        <shortName evidence="1">PSII-Z</shortName>
    </recommendedName>
</protein>
<comment type="function">
    <text evidence="1">May control the interaction of photosystem II (PSII) cores with the light-harvesting antenna, regulates electron flow through the 2 photosystem reaction centers. PSII is a light-driven water plastoquinone oxidoreductase, using light energy to abstract electrons from H(2)O, generating a proton gradient subsequently used for ATP formation.</text>
</comment>
<comment type="subunit">
    <text evidence="1">PSII is composed of 1 copy each of membrane proteins PsbA, PsbB, PsbC, PsbD, PsbE, PsbF, PsbH, PsbI, PsbJ, PsbK, PsbL, PsbM, PsbT, PsbY, PsbZ, Psb30/Ycf12, at least 3 peripheral proteins of the oxygen-evolving complex and a large number of cofactors. It forms dimeric complexes.</text>
</comment>
<comment type="subcellular location">
    <subcellularLocation>
        <location evidence="1">Plastid</location>
        <location evidence="1">Chloroplast thylakoid membrane</location>
        <topology evidence="1">Multi-pass membrane protein</topology>
    </subcellularLocation>
</comment>
<comment type="similarity">
    <text evidence="1">Belongs to the PsbZ family.</text>
</comment>
<reference key="1">
    <citation type="journal article" date="2000" name="DNA Res.">
        <title>Complete structure of the chloroplast genome of a legume, Lotus japonicus.</title>
        <authorList>
            <person name="Kato T."/>
            <person name="Kaneko T."/>
            <person name="Sato S."/>
            <person name="Nakamura Y."/>
            <person name="Tabata S."/>
        </authorList>
    </citation>
    <scope>NUCLEOTIDE SEQUENCE [LARGE SCALE GENOMIC DNA]</scope>
    <source>
        <strain>cv. Miyakojima MG-20</strain>
    </source>
</reference>
<dbReference type="EMBL" id="AP002983">
    <property type="protein sequence ID" value="BAB33189.1"/>
    <property type="molecule type" value="Genomic_DNA"/>
</dbReference>
<dbReference type="RefSeq" id="NP_084791.1">
    <property type="nucleotide sequence ID" value="NC_002694.1"/>
</dbReference>
<dbReference type="SMR" id="Q9BBT2"/>
<dbReference type="GeneID" id="802933"/>
<dbReference type="GO" id="GO:0009535">
    <property type="term" value="C:chloroplast thylakoid membrane"/>
    <property type="evidence" value="ECO:0007669"/>
    <property type="project" value="UniProtKB-SubCell"/>
</dbReference>
<dbReference type="GO" id="GO:0009539">
    <property type="term" value="C:photosystem II reaction center"/>
    <property type="evidence" value="ECO:0007669"/>
    <property type="project" value="InterPro"/>
</dbReference>
<dbReference type="GO" id="GO:0015979">
    <property type="term" value="P:photosynthesis"/>
    <property type="evidence" value="ECO:0007669"/>
    <property type="project" value="UniProtKB-UniRule"/>
</dbReference>
<dbReference type="GO" id="GO:0042549">
    <property type="term" value="P:photosystem II stabilization"/>
    <property type="evidence" value="ECO:0007669"/>
    <property type="project" value="InterPro"/>
</dbReference>
<dbReference type="FunFam" id="1.10.287.740:FF:000001">
    <property type="entry name" value="Photosystem II reaction center protein Z"/>
    <property type="match status" value="1"/>
</dbReference>
<dbReference type="Gene3D" id="1.10.287.740">
    <property type="entry name" value="Photosystem II PsbZ, reaction centre"/>
    <property type="match status" value="1"/>
</dbReference>
<dbReference type="HAMAP" id="MF_00644">
    <property type="entry name" value="PSII_PsbZ"/>
    <property type="match status" value="1"/>
</dbReference>
<dbReference type="InterPro" id="IPR002644">
    <property type="entry name" value="PSII_PsbZ"/>
</dbReference>
<dbReference type="InterPro" id="IPR036512">
    <property type="entry name" value="PSII_PsbZ_sf"/>
</dbReference>
<dbReference type="NCBIfam" id="TIGR03043">
    <property type="entry name" value="PS_II_psbZ"/>
    <property type="match status" value="1"/>
</dbReference>
<dbReference type="PANTHER" id="PTHR34971">
    <property type="entry name" value="PHOTOSYSTEM II REACTION CENTER PROTEIN Z"/>
    <property type="match status" value="1"/>
</dbReference>
<dbReference type="PANTHER" id="PTHR34971:SF2">
    <property type="entry name" value="PHOTOSYSTEM II REACTION CENTER PROTEIN Z"/>
    <property type="match status" value="1"/>
</dbReference>
<dbReference type="Pfam" id="PF01737">
    <property type="entry name" value="Ycf9"/>
    <property type="match status" value="1"/>
</dbReference>
<dbReference type="SUPFAM" id="SSF161055">
    <property type="entry name" value="PsbZ-like"/>
    <property type="match status" value="1"/>
</dbReference>
<keyword id="KW-0150">Chloroplast</keyword>
<keyword id="KW-0472">Membrane</keyword>
<keyword id="KW-0602">Photosynthesis</keyword>
<keyword id="KW-0604">Photosystem II</keyword>
<keyword id="KW-0934">Plastid</keyword>
<keyword id="KW-0674">Reaction center</keyword>
<keyword id="KW-0793">Thylakoid</keyword>
<keyword id="KW-0812">Transmembrane</keyword>
<keyword id="KW-1133">Transmembrane helix</keyword>
<gene>
    <name evidence="1" type="primary">psbZ</name>
    <name type="synonym">ycf9</name>
</gene>
<geneLocation type="chloroplast"/>
<accession>Q9BBT2</accession>
<sequence length="62" mass="6541">MTIAFQLAVFALIATSSILLISVPVVFASPDGWSSNKNVVFSGTSLWIALVFLVGILNSLIS</sequence>
<organism>
    <name type="scientific">Lotus japonicus</name>
    <name type="common">Lotus corniculatus var. japonicus</name>
    <dbReference type="NCBI Taxonomy" id="34305"/>
    <lineage>
        <taxon>Eukaryota</taxon>
        <taxon>Viridiplantae</taxon>
        <taxon>Streptophyta</taxon>
        <taxon>Embryophyta</taxon>
        <taxon>Tracheophyta</taxon>
        <taxon>Spermatophyta</taxon>
        <taxon>Magnoliopsida</taxon>
        <taxon>eudicotyledons</taxon>
        <taxon>Gunneridae</taxon>
        <taxon>Pentapetalae</taxon>
        <taxon>rosids</taxon>
        <taxon>fabids</taxon>
        <taxon>Fabales</taxon>
        <taxon>Fabaceae</taxon>
        <taxon>Papilionoideae</taxon>
        <taxon>50 kb inversion clade</taxon>
        <taxon>NPAAA clade</taxon>
        <taxon>Hologalegina</taxon>
        <taxon>robinioid clade</taxon>
        <taxon>Loteae</taxon>
        <taxon>Lotus</taxon>
    </lineage>
</organism>
<feature type="chain" id="PRO_0000217709" description="Photosystem II reaction center protein Z">
    <location>
        <begin position="1"/>
        <end position="62"/>
    </location>
</feature>
<feature type="transmembrane region" description="Helical" evidence="1">
    <location>
        <begin position="8"/>
        <end position="28"/>
    </location>
</feature>
<feature type="transmembrane region" description="Helical" evidence="1">
    <location>
        <begin position="41"/>
        <end position="61"/>
    </location>
</feature>
<proteinExistence type="inferred from homology"/>
<name>PSBZ_LOTJA</name>